<keyword id="KW-0687">Ribonucleoprotein</keyword>
<keyword id="KW-0689">Ribosomal protein</keyword>
<keyword id="KW-0694">RNA-binding</keyword>
<keyword id="KW-0699">rRNA-binding</keyword>
<accession>B7GSB1</accession>
<accession>E8ML22</accession>
<organism>
    <name type="scientific">Bifidobacterium longum subsp. infantis (strain ATCC 15697 / DSM 20088 / JCM 1222 / NCTC 11817 / S12)</name>
    <dbReference type="NCBI Taxonomy" id="391904"/>
    <lineage>
        <taxon>Bacteria</taxon>
        <taxon>Bacillati</taxon>
        <taxon>Actinomycetota</taxon>
        <taxon>Actinomycetes</taxon>
        <taxon>Bifidobacteriales</taxon>
        <taxon>Bifidobacteriaceae</taxon>
        <taxon>Bifidobacterium</taxon>
    </lineage>
</organism>
<gene>
    <name evidence="1" type="primary">rpsD</name>
    <name type="ordered locus">Blon_1612</name>
    <name type="ordered locus">BLIJ_1667</name>
</gene>
<feature type="chain" id="PRO_1000165384" description="Small ribosomal subunit protein uS4">
    <location>
        <begin position="1"/>
        <end position="208"/>
    </location>
</feature>
<feature type="domain" description="S4 RNA-binding" evidence="1">
    <location>
        <begin position="95"/>
        <end position="161"/>
    </location>
</feature>
<feature type="region of interest" description="Disordered" evidence="2">
    <location>
        <begin position="30"/>
        <end position="49"/>
    </location>
</feature>
<name>RS4_BIFLS</name>
<protein>
    <recommendedName>
        <fullName evidence="1">Small ribosomal subunit protein uS4</fullName>
    </recommendedName>
    <alternativeName>
        <fullName evidence="3">30S ribosomal protein S4</fullName>
    </alternativeName>
</protein>
<dbReference type="EMBL" id="CP001095">
    <property type="protein sequence ID" value="ACJ52691.1"/>
    <property type="molecule type" value="Genomic_DNA"/>
</dbReference>
<dbReference type="EMBL" id="AP010889">
    <property type="protein sequence ID" value="BAJ69249.1"/>
    <property type="molecule type" value="Genomic_DNA"/>
</dbReference>
<dbReference type="RefSeq" id="WP_007052130.1">
    <property type="nucleotide sequence ID" value="NZ_JDTT01000018.1"/>
</dbReference>
<dbReference type="SMR" id="B7GSB1"/>
<dbReference type="GeneID" id="69577973"/>
<dbReference type="KEGG" id="bln:Blon_1612"/>
<dbReference type="KEGG" id="blon:BLIJ_1667"/>
<dbReference type="PATRIC" id="fig|391904.8.peg.1680"/>
<dbReference type="HOGENOM" id="CLU_092403_0_3_11"/>
<dbReference type="Proteomes" id="UP000001360">
    <property type="component" value="Chromosome"/>
</dbReference>
<dbReference type="GO" id="GO:0015935">
    <property type="term" value="C:small ribosomal subunit"/>
    <property type="evidence" value="ECO:0007669"/>
    <property type="project" value="InterPro"/>
</dbReference>
<dbReference type="GO" id="GO:0019843">
    <property type="term" value="F:rRNA binding"/>
    <property type="evidence" value="ECO:0007669"/>
    <property type="project" value="UniProtKB-UniRule"/>
</dbReference>
<dbReference type="GO" id="GO:0003735">
    <property type="term" value="F:structural constituent of ribosome"/>
    <property type="evidence" value="ECO:0007669"/>
    <property type="project" value="InterPro"/>
</dbReference>
<dbReference type="GO" id="GO:0042274">
    <property type="term" value="P:ribosomal small subunit biogenesis"/>
    <property type="evidence" value="ECO:0007669"/>
    <property type="project" value="TreeGrafter"/>
</dbReference>
<dbReference type="GO" id="GO:0006412">
    <property type="term" value="P:translation"/>
    <property type="evidence" value="ECO:0007669"/>
    <property type="project" value="UniProtKB-UniRule"/>
</dbReference>
<dbReference type="CDD" id="cd00165">
    <property type="entry name" value="S4"/>
    <property type="match status" value="1"/>
</dbReference>
<dbReference type="FunFam" id="3.10.290.10:FF:000001">
    <property type="entry name" value="30S ribosomal protein S4"/>
    <property type="match status" value="1"/>
</dbReference>
<dbReference type="Gene3D" id="1.10.1050.10">
    <property type="entry name" value="Ribosomal Protein S4 Delta 41, Chain A, domain 1"/>
    <property type="match status" value="1"/>
</dbReference>
<dbReference type="Gene3D" id="3.10.290.10">
    <property type="entry name" value="RNA-binding S4 domain"/>
    <property type="match status" value="1"/>
</dbReference>
<dbReference type="HAMAP" id="MF_01306_B">
    <property type="entry name" value="Ribosomal_uS4_B"/>
    <property type="match status" value="1"/>
</dbReference>
<dbReference type="InterPro" id="IPR022801">
    <property type="entry name" value="Ribosomal_uS4"/>
</dbReference>
<dbReference type="InterPro" id="IPR005709">
    <property type="entry name" value="Ribosomal_uS4_bac-type"/>
</dbReference>
<dbReference type="InterPro" id="IPR018079">
    <property type="entry name" value="Ribosomal_uS4_CS"/>
</dbReference>
<dbReference type="InterPro" id="IPR001912">
    <property type="entry name" value="Ribosomal_uS4_N"/>
</dbReference>
<dbReference type="InterPro" id="IPR002942">
    <property type="entry name" value="S4_RNA-bd"/>
</dbReference>
<dbReference type="InterPro" id="IPR036986">
    <property type="entry name" value="S4_RNA-bd_sf"/>
</dbReference>
<dbReference type="NCBIfam" id="NF003717">
    <property type="entry name" value="PRK05327.1"/>
    <property type="match status" value="1"/>
</dbReference>
<dbReference type="NCBIfam" id="TIGR01017">
    <property type="entry name" value="rpsD_bact"/>
    <property type="match status" value="1"/>
</dbReference>
<dbReference type="PANTHER" id="PTHR11831">
    <property type="entry name" value="30S 40S RIBOSOMAL PROTEIN"/>
    <property type="match status" value="1"/>
</dbReference>
<dbReference type="PANTHER" id="PTHR11831:SF4">
    <property type="entry name" value="SMALL RIBOSOMAL SUBUNIT PROTEIN US4M"/>
    <property type="match status" value="1"/>
</dbReference>
<dbReference type="Pfam" id="PF00163">
    <property type="entry name" value="Ribosomal_S4"/>
    <property type="match status" value="1"/>
</dbReference>
<dbReference type="Pfam" id="PF01479">
    <property type="entry name" value="S4"/>
    <property type="match status" value="1"/>
</dbReference>
<dbReference type="SMART" id="SM01390">
    <property type="entry name" value="Ribosomal_S4"/>
    <property type="match status" value="1"/>
</dbReference>
<dbReference type="SMART" id="SM00363">
    <property type="entry name" value="S4"/>
    <property type="match status" value="1"/>
</dbReference>
<dbReference type="SUPFAM" id="SSF55174">
    <property type="entry name" value="Alpha-L RNA-binding motif"/>
    <property type="match status" value="1"/>
</dbReference>
<dbReference type="PROSITE" id="PS00632">
    <property type="entry name" value="RIBOSOMAL_S4"/>
    <property type="match status" value="1"/>
</dbReference>
<dbReference type="PROSITE" id="PS50889">
    <property type="entry name" value="S4"/>
    <property type="match status" value="1"/>
</dbReference>
<evidence type="ECO:0000255" key="1">
    <source>
        <dbReference type="HAMAP-Rule" id="MF_01306"/>
    </source>
</evidence>
<evidence type="ECO:0000256" key="2">
    <source>
        <dbReference type="SAM" id="MobiDB-lite"/>
    </source>
</evidence>
<evidence type="ECO:0000305" key="3"/>
<proteinExistence type="inferred from homology"/>
<reference key="1">
    <citation type="journal article" date="2008" name="Proc. Natl. Acad. Sci. U.S.A.">
        <title>The genome sequence of Bifidobacterium longum subsp. infantis reveals adaptations for milk utilization within the infant microbiome.</title>
        <authorList>
            <person name="Sela D.A."/>
            <person name="Chapman J."/>
            <person name="Adeuya A."/>
            <person name="Kim J.H."/>
            <person name="Chen F."/>
            <person name="Whitehead T.R."/>
            <person name="Lapidus A."/>
            <person name="Rokhsar D.S."/>
            <person name="Lebrilla C.B."/>
            <person name="German J.B."/>
            <person name="Price N.P."/>
            <person name="Richardson P.M."/>
            <person name="Mills D.A."/>
        </authorList>
    </citation>
    <scope>NUCLEOTIDE SEQUENCE [LARGE SCALE GENOMIC DNA]</scope>
    <source>
        <strain>ATCC 15697 / DSM 20088 / JCM 1222 / NCTC 11817 / S12</strain>
    </source>
</reference>
<reference key="2">
    <citation type="journal article" date="2011" name="Nature">
        <title>Bifidobacteria can protect from enteropathogenic infection through production of acetate.</title>
        <authorList>
            <person name="Fukuda S."/>
            <person name="Toh H."/>
            <person name="Hase K."/>
            <person name="Oshima K."/>
            <person name="Nakanishi Y."/>
            <person name="Yoshimura K."/>
            <person name="Tobe T."/>
            <person name="Clarke J.M."/>
            <person name="Topping D.L."/>
            <person name="Suzuki T."/>
            <person name="Taylor T.D."/>
            <person name="Itoh K."/>
            <person name="Kikuchi J."/>
            <person name="Morita H."/>
            <person name="Hattori M."/>
            <person name="Ohno H."/>
        </authorList>
    </citation>
    <scope>NUCLEOTIDE SEQUENCE [LARGE SCALE GENOMIC DNA]</scope>
    <source>
        <strain>ATCC 15697 / DSM 20088 / JCM 1222 / NCTC 11817 / S12</strain>
    </source>
</reference>
<sequence length="208" mass="23719">MTNVQRSRRQVRLSRALGIALTPKAQRIFEKRPYAPGEHGRDRRRTESDYAVRMREKQRLRAQYGISEKQLRAAYEKATRTAGQTGNAMLTDLETRLDNLVLRAGFARTTAQARQFVVHRHILVDGNIVDRPSYRVKPGQTIQVKAKSQTMVPFQIAAEGVHRDVLPAVPGYLDVNLPSLKATVTRKPEVEEIPVQVNIQYVVEFYAR</sequence>
<comment type="function">
    <text evidence="1">One of the primary rRNA binding proteins, it binds directly to 16S rRNA where it nucleates assembly of the body of the 30S subunit.</text>
</comment>
<comment type="function">
    <text evidence="1">With S5 and S12 plays an important role in translational accuracy.</text>
</comment>
<comment type="subunit">
    <text evidence="1">Part of the 30S ribosomal subunit. Contacts protein S5. The interaction surface between S4 and S5 is involved in control of translational fidelity.</text>
</comment>
<comment type="similarity">
    <text evidence="1">Belongs to the universal ribosomal protein uS4 family.</text>
</comment>